<name>HBB_VULVU</name>
<accession>P21201</accession>
<evidence type="ECO:0000250" key="1">
    <source>
        <dbReference type="UniProtKB" id="P02086"/>
    </source>
</evidence>
<evidence type="ECO:0000250" key="2">
    <source>
        <dbReference type="UniProtKB" id="P68871"/>
    </source>
</evidence>
<evidence type="ECO:0000255" key="3">
    <source>
        <dbReference type="PROSITE-ProRule" id="PRU00238"/>
    </source>
</evidence>
<protein>
    <recommendedName>
        <fullName>Hemoglobin subunit beta</fullName>
    </recommendedName>
    <alternativeName>
        <fullName>Beta-globin</fullName>
    </alternativeName>
    <alternativeName>
        <fullName>Hemoglobin beta chain</fullName>
    </alternativeName>
</protein>
<feature type="chain" id="PRO_0000053152" description="Hemoglobin subunit beta">
    <location>
        <begin position="1"/>
        <end position="146"/>
    </location>
</feature>
<feature type="domain" description="Globin" evidence="3">
    <location>
        <begin position="2"/>
        <end position="146"/>
    </location>
</feature>
<feature type="binding site" description="distal binding residue">
    <location>
        <position position="63"/>
    </location>
    <ligand>
        <name>heme b</name>
        <dbReference type="ChEBI" id="CHEBI:60344"/>
    </ligand>
    <ligandPart>
        <name>Fe</name>
        <dbReference type="ChEBI" id="CHEBI:18248"/>
    </ligandPart>
</feature>
<feature type="binding site" description="proximal binding residue">
    <location>
        <position position="92"/>
    </location>
    <ligand>
        <name>heme b</name>
        <dbReference type="ChEBI" id="CHEBI:60344"/>
    </ligand>
    <ligandPart>
        <name>Fe</name>
        <dbReference type="ChEBI" id="CHEBI:18248"/>
    </ligandPart>
</feature>
<feature type="modified residue" description="N-acetylvaline" evidence="1">
    <location>
        <position position="1"/>
    </location>
</feature>
<feature type="modified residue" description="Phosphothreonine" evidence="2">
    <location>
        <position position="12"/>
    </location>
</feature>
<feature type="modified residue" description="Phosphoserine" evidence="2">
    <location>
        <position position="44"/>
    </location>
</feature>
<feature type="modified residue" description="N6-acetyllysine" evidence="2">
    <location>
        <position position="59"/>
    </location>
</feature>
<feature type="modified residue" description="N6-acetyllysine" evidence="2">
    <location>
        <position position="82"/>
    </location>
</feature>
<feature type="modified residue" description="S-nitrosocysteine" evidence="2">
    <location>
        <position position="93"/>
    </location>
</feature>
<feature type="modified residue" description="N6-acetyllysine" evidence="2">
    <location>
        <position position="144"/>
    </location>
</feature>
<comment type="function">
    <text>Involved in oxygen transport from the lung to the various peripheral tissues.</text>
</comment>
<comment type="subunit">
    <text>Heterotetramer of two alpha chains and two beta chains.</text>
</comment>
<comment type="tissue specificity">
    <text>Red blood cells.</text>
</comment>
<comment type="similarity">
    <text evidence="3">Belongs to the globin family.</text>
</comment>
<sequence>VHLTAEEKSLVTGLWGKVNVDEVGGEALGRLLIVYPWTQRFFDSFGDLSTPDAVMGNAKVKAHGKKVLNSFSDGLKNLDNLKGTFAKLSELHCDKLHVDPENFKLLGNVLVCVLAHHFGKEFTPQVQAAYQKVVAGVANALAHKYH</sequence>
<dbReference type="PIR" id="S13457">
    <property type="entry name" value="S13457"/>
</dbReference>
<dbReference type="SMR" id="P21201"/>
<dbReference type="STRING" id="9627.ENSVVUP00000021188"/>
<dbReference type="OMA" id="HAIVSIW"/>
<dbReference type="Proteomes" id="UP000286640">
    <property type="component" value="Unplaced"/>
</dbReference>
<dbReference type="GO" id="GO:0072562">
    <property type="term" value="C:blood microparticle"/>
    <property type="evidence" value="ECO:0007669"/>
    <property type="project" value="TreeGrafter"/>
</dbReference>
<dbReference type="GO" id="GO:0031838">
    <property type="term" value="C:haptoglobin-hemoglobin complex"/>
    <property type="evidence" value="ECO:0007669"/>
    <property type="project" value="TreeGrafter"/>
</dbReference>
<dbReference type="GO" id="GO:0005833">
    <property type="term" value="C:hemoglobin complex"/>
    <property type="evidence" value="ECO:0007669"/>
    <property type="project" value="InterPro"/>
</dbReference>
<dbReference type="GO" id="GO:0031720">
    <property type="term" value="F:haptoglobin binding"/>
    <property type="evidence" value="ECO:0007669"/>
    <property type="project" value="TreeGrafter"/>
</dbReference>
<dbReference type="GO" id="GO:0020037">
    <property type="term" value="F:heme binding"/>
    <property type="evidence" value="ECO:0007669"/>
    <property type="project" value="InterPro"/>
</dbReference>
<dbReference type="GO" id="GO:0031721">
    <property type="term" value="F:hemoglobin alpha binding"/>
    <property type="evidence" value="ECO:0007669"/>
    <property type="project" value="TreeGrafter"/>
</dbReference>
<dbReference type="GO" id="GO:0046872">
    <property type="term" value="F:metal ion binding"/>
    <property type="evidence" value="ECO:0007669"/>
    <property type="project" value="UniProtKB-KW"/>
</dbReference>
<dbReference type="GO" id="GO:0043177">
    <property type="term" value="F:organic acid binding"/>
    <property type="evidence" value="ECO:0007669"/>
    <property type="project" value="TreeGrafter"/>
</dbReference>
<dbReference type="GO" id="GO:0019825">
    <property type="term" value="F:oxygen binding"/>
    <property type="evidence" value="ECO:0007669"/>
    <property type="project" value="InterPro"/>
</dbReference>
<dbReference type="GO" id="GO:0005344">
    <property type="term" value="F:oxygen carrier activity"/>
    <property type="evidence" value="ECO:0007669"/>
    <property type="project" value="UniProtKB-KW"/>
</dbReference>
<dbReference type="GO" id="GO:0004601">
    <property type="term" value="F:peroxidase activity"/>
    <property type="evidence" value="ECO:0007669"/>
    <property type="project" value="TreeGrafter"/>
</dbReference>
<dbReference type="GO" id="GO:0042744">
    <property type="term" value="P:hydrogen peroxide catabolic process"/>
    <property type="evidence" value="ECO:0007669"/>
    <property type="project" value="TreeGrafter"/>
</dbReference>
<dbReference type="CDD" id="cd08925">
    <property type="entry name" value="Hb-beta-like"/>
    <property type="match status" value="1"/>
</dbReference>
<dbReference type="FunFam" id="1.10.490.10:FF:000001">
    <property type="entry name" value="Hemoglobin subunit beta"/>
    <property type="match status" value="1"/>
</dbReference>
<dbReference type="Gene3D" id="1.10.490.10">
    <property type="entry name" value="Globins"/>
    <property type="match status" value="1"/>
</dbReference>
<dbReference type="InterPro" id="IPR000971">
    <property type="entry name" value="Globin"/>
</dbReference>
<dbReference type="InterPro" id="IPR009050">
    <property type="entry name" value="Globin-like_sf"/>
</dbReference>
<dbReference type="InterPro" id="IPR012292">
    <property type="entry name" value="Globin/Proto"/>
</dbReference>
<dbReference type="InterPro" id="IPR002337">
    <property type="entry name" value="Hemoglobin_b"/>
</dbReference>
<dbReference type="InterPro" id="IPR050056">
    <property type="entry name" value="Hemoglobin_oxygen_transport"/>
</dbReference>
<dbReference type="PANTHER" id="PTHR11442">
    <property type="entry name" value="HEMOGLOBIN FAMILY MEMBER"/>
    <property type="match status" value="1"/>
</dbReference>
<dbReference type="PANTHER" id="PTHR11442:SF42">
    <property type="entry name" value="HEMOGLOBIN SUBUNIT BETA"/>
    <property type="match status" value="1"/>
</dbReference>
<dbReference type="Pfam" id="PF00042">
    <property type="entry name" value="Globin"/>
    <property type="match status" value="1"/>
</dbReference>
<dbReference type="PRINTS" id="PR00814">
    <property type="entry name" value="BETAHAEM"/>
</dbReference>
<dbReference type="SUPFAM" id="SSF46458">
    <property type="entry name" value="Globin-like"/>
    <property type="match status" value="1"/>
</dbReference>
<dbReference type="PROSITE" id="PS01033">
    <property type="entry name" value="GLOBIN"/>
    <property type="match status" value="1"/>
</dbReference>
<organism>
    <name type="scientific">Vulpes vulpes</name>
    <name type="common">Red fox</name>
    <dbReference type="NCBI Taxonomy" id="9627"/>
    <lineage>
        <taxon>Eukaryota</taxon>
        <taxon>Metazoa</taxon>
        <taxon>Chordata</taxon>
        <taxon>Craniata</taxon>
        <taxon>Vertebrata</taxon>
        <taxon>Euteleostomi</taxon>
        <taxon>Mammalia</taxon>
        <taxon>Eutheria</taxon>
        <taxon>Laurasiatheria</taxon>
        <taxon>Carnivora</taxon>
        <taxon>Caniformia</taxon>
        <taxon>Canidae</taxon>
        <taxon>Vulpes</taxon>
    </lineage>
</organism>
<reference key="1">
    <citation type="journal article" date="1991" name="Biol. Chem. Hoppe-Seyler">
        <title>Carnivora: the primary structure of the hemoglobin from the silver fox (Vulpes vulpes var., Canidae).</title>
        <authorList>
            <person name="He C."/>
            <person name="Braunitzer G."/>
        </authorList>
    </citation>
    <scope>PROTEIN SEQUENCE</scope>
    <source>
        <strain>Subsp. fulvus / Silver fox</strain>
    </source>
</reference>
<proteinExistence type="evidence at protein level"/>
<gene>
    <name type="primary">HBB</name>
</gene>
<keyword id="KW-0007">Acetylation</keyword>
<keyword id="KW-0903">Direct protein sequencing</keyword>
<keyword id="KW-0349">Heme</keyword>
<keyword id="KW-0408">Iron</keyword>
<keyword id="KW-0479">Metal-binding</keyword>
<keyword id="KW-0561">Oxygen transport</keyword>
<keyword id="KW-0597">Phosphoprotein</keyword>
<keyword id="KW-1185">Reference proteome</keyword>
<keyword id="KW-0702">S-nitrosylation</keyword>
<keyword id="KW-0813">Transport</keyword>